<proteinExistence type="inferred from homology"/>
<feature type="chain" id="PRO_1000092620" description="Ribosomal RNA small subunit methyltransferase G">
    <location>
        <begin position="1"/>
        <end position="220"/>
    </location>
</feature>
<feature type="binding site" evidence="1">
    <location>
        <position position="82"/>
    </location>
    <ligand>
        <name>S-adenosyl-L-methionine</name>
        <dbReference type="ChEBI" id="CHEBI:59789"/>
    </ligand>
</feature>
<feature type="binding site" evidence="1">
    <location>
        <position position="87"/>
    </location>
    <ligand>
        <name>S-adenosyl-L-methionine</name>
        <dbReference type="ChEBI" id="CHEBI:59789"/>
    </ligand>
</feature>
<feature type="binding site" evidence="1">
    <location>
        <begin position="105"/>
        <end position="107"/>
    </location>
    <ligand>
        <name>S-adenosyl-L-methionine</name>
        <dbReference type="ChEBI" id="CHEBI:59789"/>
    </ligand>
</feature>
<feature type="binding site" evidence="1">
    <location>
        <begin position="133"/>
        <end position="134"/>
    </location>
    <ligand>
        <name>S-adenosyl-L-methionine</name>
        <dbReference type="ChEBI" id="CHEBI:59789"/>
    </ligand>
</feature>
<feature type="binding site" evidence="1">
    <location>
        <position position="147"/>
    </location>
    <ligand>
        <name>S-adenosyl-L-methionine</name>
        <dbReference type="ChEBI" id="CHEBI:59789"/>
    </ligand>
</feature>
<organism>
    <name type="scientific">Chlorobium limicola (strain DSM 245 / NBRC 103803 / 6330)</name>
    <dbReference type="NCBI Taxonomy" id="290315"/>
    <lineage>
        <taxon>Bacteria</taxon>
        <taxon>Pseudomonadati</taxon>
        <taxon>Chlorobiota</taxon>
        <taxon>Chlorobiia</taxon>
        <taxon>Chlorobiales</taxon>
        <taxon>Chlorobiaceae</taxon>
        <taxon>Chlorobium/Pelodictyon group</taxon>
        <taxon>Chlorobium</taxon>
    </lineage>
</organism>
<comment type="function">
    <text evidence="1">Specifically methylates the N7 position of a guanine in 16S rRNA.</text>
</comment>
<comment type="subcellular location">
    <subcellularLocation>
        <location evidence="1">Cytoplasm</location>
    </subcellularLocation>
</comment>
<comment type="similarity">
    <text evidence="1">Belongs to the methyltransferase superfamily. RNA methyltransferase RsmG family.</text>
</comment>
<gene>
    <name evidence="1" type="primary">rsmG</name>
    <name type="ordered locus">Clim_2200</name>
</gene>
<evidence type="ECO:0000255" key="1">
    <source>
        <dbReference type="HAMAP-Rule" id="MF_00074"/>
    </source>
</evidence>
<name>RSMG_CHLL2</name>
<reference key="1">
    <citation type="submission" date="2008-05" db="EMBL/GenBank/DDBJ databases">
        <title>Complete sequence of Chlorobium limicola DSM 245.</title>
        <authorList>
            <consortium name="US DOE Joint Genome Institute"/>
            <person name="Lucas S."/>
            <person name="Copeland A."/>
            <person name="Lapidus A."/>
            <person name="Glavina del Rio T."/>
            <person name="Dalin E."/>
            <person name="Tice H."/>
            <person name="Bruce D."/>
            <person name="Goodwin L."/>
            <person name="Pitluck S."/>
            <person name="Schmutz J."/>
            <person name="Larimer F."/>
            <person name="Land M."/>
            <person name="Hauser L."/>
            <person name="Kyrpides N."/>
            <person name="Ovchinnikova G."/>
            <person name="Zhao F."/>
            <person name="Li T."/>
            <person name="Liu Z."/>
            <person name="Overmann J."/>
            <person name="Bryant D.A."/>
            <person name="Richardson P."/>
        </authorList>
    </citation>
    <scope>NUCLEOTIDE SEQUENCE [LARGE SCALE GENOMIC DNA]</scope>
    <source>
        <strain>DSM 245 / NBRC 103803 / 6330</strain>
    </source>
</reference>
<protein>
    <recommendedName>
        <fullName evidence="1">Ribosomal RNA small subunit methyltransferase G</fullName>
        <ecNumber evidence="1">2.1.1.-</ecNumber>
    </recommendedName>
    <alternativeName>
        <fullName evidence="1">16S rRNA 7-methylguanosine methyltransferase</fullName>
        <shortName evidence="1">16S rRNA m7G methyltransferase</shortName>
    </alternativeName>
</protein>
<keyword id="KW-0963">Cytoplasm</keyword>
<keyword id="KW-0489">Methyltransferase</keyword>
<keyword id="KW-0698">rRNA processing</keyword>
<keyword id="KW-0949">S-adenosyl-L-methionine</keyword>
<keyword id="KW-0808">Transferase</keyword>
<dbReference type="EC" id="2.1.1.-" evidence="1"/>
<dbReference type="EMBL" id="CP001097">
    <property type="protein sequence ID" value="ACD91224.1"/>
    <property type="molecule type" value="Genomic_DNA"/>
</dbReference>
<dbReference type="RefSeq" id="WP_012467092.1">
    <property type="nucleotide sequence ID" value="NC_010803.1"/>
</dbReference>
<dbReference type="SMR" id="B3EGW1"/>
<dbReference type="STRING" id="290315.Clim_2200"/>
<dbReference type="KEGG" id="cli:Clim_2200"/>
<dbReference type="eggNOG" id="COG0357">
    <property type="taxonomic scope" value="Bacteria"/>
</dbReference>
<dbReference type="HOGENOM" id="CLU_065341_2_2_10"/>
<dbReference type="OrthoDB" id="9808773at2"/>
<dbReference type="Proteomes" id="UP000008841">
    <property type="component" value="Chromosome"/>
</dbReference>
<dbReference type="GO" id="GO:0005829">
    <property type="term" value="C:cytosol"/>
    <property type="evidence" value="ECO:0007669"/>
    <property type="project" value="TreeGrafter"/>
</dbReference>
<dbReference type="GO" id="GO:0070043">
    <property type="term" value="F:rRNA (guanine-N7-)-methyltransferase activity"/>
    <property type="evidence" value="ECO:0007669"/>
    <property type="project" value="UniProtKB-UniRule"/>
</dbReference>
<dbReference type="CDD" id="cd02440">
    <property type="entry name" value="AdoMet_MTases"/>
    <property type="match status" value="1"/>
</dbReference>
<dbReference type="Gene3D" id="3.40.50.150">
    <property type="entry name" value="Vaccinia Virus protein VP39"/>
    <property type="match status" value="1"/>
</dbReference>
<dbReference type="HAMAP" id="MF_00074">
    <property type="entry name" value="16SrRNA_methyltr_G"/>
    <property type="match status" value="1"/>
</dbReference>
<dbReference type="InterPro" id="IPR003682">
    <property type="entry name" value="rRNA_ssu_MeTfrase_G"/>
</dbReference>
<dbReference type="InterPro" id="IPR029063">
    <property type="entry name" value="SAM-dependent_MTases_sf"/>
</dbReference>
<dbReference type="NCBIfam" id="TIGR00138">
    <property type="entry name" value="rsmG_gidB"/>
    <property type="match status" value="1"/>
</dbReference>
<dbReference type="PANTHER" id="PTHR31760">
    <property type="entry name" value="S-ADENOSYL-L-METHIONINE-DEPENDENT METHYLTRANSFERASES SUPERFAMILY PROTEIN"/>
    <property type="match status" value="1"/>
</dbReference>
<dbReference type="PANTHER" id="PTHR31760:SF0">
    <property type="entry name" value="S-ADENOSYL-L-METHIONINE-DEPENDENT METHYLTRANSFERASES SUPERFAMILY PROTEIN"/>
    <property type="match status" value="1"/>
</dbReference>
<dbReference type="Pfam" id="PF02527">
    <property type="entry name" value="GidB"/>
    <property type="match status" value="1"/>
</dbReference>
<dbReference type="PIRSF" id="PIRSF003078">
    <property type="entry name" value="GidB"/>
    <property type="match status" value="1"/>
</dbReference>
<dbReference type="SUPFAM" id="SSF53335">
    <property type="entry name" value="S-adenosyl-L-methionine-dependent methyltransferases"/>
    <property type="match status" value="1"/>
</dbReference>
<accession>B3EGW1</accession>
<sequence>MKRHTEELDALYELCSREKMELTESQYELLAAYALLLEQWNKKINLISRKEDAPVVIKHVFHSLLMGLFHPFSAGEKVLDLGTGGGLPGIPLAIAWPETRFLLVDSTGKKIAACQAMIKELGISNAVALHSRVEELKGLTFDTVLSRQVAQLEQLCAYTYRFLKPEGCLICLKGGNLEEEIRTALDARHAHHGFPSTIEHFAISGFSPFFAEKEIVIAQR</sequence>